<dbReference type="EMBL" id="CP000553">
    <property type="protein sequence ID" value="ABM74841.1"/>
    <property type="molecule type" value="Genomic_DNA"/>
</dbReference>
<dbReference type="RefSeq" id="WP_011823058.1">
    <property type="nucleotide sequence ID" value="NC_008819.1"/>
</dbReference>
<dbReference type="SMR" id="A2C031"/>
<dbReference type="KEGG" id="pme:NATL1_02771"/>
<dbReference type="eggNOG" id="COG0222">
    <property type="taxonomic scope" value="Bacteria"/>
</dbReference>
<dbReference type="HOGENOM" id="CLU_086499_3_0_3"/>
<dbReference type="Proteomes" id="UP000002592">
    <property type="component" value="Chromosome"/>
</dbReference>
<dbReference type="GO" id="GO:0022625">
    <property type="term" value="C:cytosolic large ribosomal subunit"/>
    <property type="evidence" value="ECO:0007669"/>
    <property type="project" value="TreeGrafter"/>
</dbReference>
<dbReference type="GO" id="GO:0003729">
    <property type="term" value="F:mRNA binding"/>
    <property type="evidence" value="ECO:0007669"/>
    <property type="project" value="TreeGrafter"/>
</dbReference>
<dbReference type="GO" id="GO:0003735">
    <property type="term" value="F:structural constituent of ribosome"/>
    <property type="evidence" value="ECO:0007669"/>
    <property type="project" value="InterPro"/>
</dbReference>
<dbReference type="GO" id="GO:0006412">
    <property type="term" value="P:translation"/>
    <property type="evidence" value="ECO:0007669"/>
    <property type="project" value="UniProtKB-UniRule"/>
</dbReference>
<dbReference type="CDD" id="cd00387">
    <property type="entry name" value="Ribosomal_L7_L12"/>
    <property type="match status" value="1"/>
</dbReference>
<dbReference type="FunFam" id="3.30.1390.10:FF:000001">
    <property type="entry name" value="50S ribosomal protein L7/L12"/>
    <property type="match status" value="1"/>
</dbReference>
<dbReference type="Gene3D" id="3.30.1390.10">
    <property type="match status" value="1"/>
</dbReference>
<dbReference type="Gene3D" id="1.20.5.710">
    <property type="entry name" value="Single helix bin"/>
    <property type="match status" value="1"/>
</dbReference>
<dbReference type="HAMAP" id="MF_00368">
    <property type="entry name" value="Ribosomal_bL12"/>
    <property type="match status" value="1"/>
</dbReference>
<dbReference type="InterPro" id="IPR000206">
    <property type="entry name" value="Ribosomal_bL12"/>
</dbReference>
<dbReference type="InterPro" id="IPR013823">
    <property type="entry name" value="Ribosomal_bL12_C"/>
</dbReference>
<dbReference type="InterPro" id="IPR014719">
    <property type="entry name" value="Ribosomal_bL12_C/ClpS-like"/>
</dbReference>
<dbReference type="InterPro" id="IPR008932">
    <property type="entry name" value="Ribosomal_bL12_oligo"/>
</dbReference>
<dbReference type="InterPro" id="IPR036235">
    <property type="entry name" value="Ribosomal_bL12_oligo_N_sf"/>
</dbReference>
<dbReference type="NCBIfam" id="TIGR00855">
    <property type="entry name" value="L12"/>
    <property type="match status" value="1"/>
</dbReference>
<dbReference type="PANTHER" id="PTHR45987">
    <property type="entry name" value="39S RIBOSOMAL PROTEIN L12"/>
    <property type="match status" value="1"/>
</dbReference>
<dbReference type="PANTHER" id="PTHR45987:SF4">
    <property type="entry name" value="LARGE RIBOSOMAL SUBUNIT PROTEIN BL12M"/>
    <property type="match status" value="1"/>
</dbReference>
<dbReference type="Pfam" id="PF00542">
    <property type="entry name" value="Ribosomal_L12"/>
    <property type="match status" value="1"/>
</dbReference>
<dbReference type="Pfam" id="PF16320">
    <property type="entry name" value="Ribosomal_L12_N"/>
    <property type="match status" value="1"/>
</dbReference>
<dbReference type="SUPFAM" id="SSF54736">
    <property type="entry name" value="ClpS-like"/>
    <property type="match status" value="1"/>
</dbReference>
<dbReference type="SUPFAM" id="SSF48300">
    <property type="entry name" value="Ribosomal protein L7/12, oligomerisation (N-terminal) domain"/>
    <property type="match status" value="1"/>
</dbReference>
<gene>
    <name evidence="1" type="primary">rplL</name>
    <name evidence="1" type="synonym">rpl12</name>
    <name type="ordered locus">NATL1_02771</name>
</gene>
<feature type="chain" id="PRO_1000007057" description="Large ribosomal subunit protein bL12">
    <location>
        <begin position="1"/>
        <end position="131"/>
    </location>
</feature>
<protein>
    <recommendedName>
        <fullName evidence="1">Large ribosomal subunit protein bL12</fullName>
    </recommendedName>
    <alternativeName>
        <fullName evidence="2">50S ribosomal protein L7/L12</fullName>
    </alternativeName>
</protein>
<proteinExistence type="inferred from homology"/>
<sequence>MSAKTDEILDSLKSLSLLEASELVKQIEEAFGVSAAASAGVVMAAPGAAAGGDGADAAEEKTEFEVVLESFDASSKIKVLKEVRNATGLGLGEAKALVEAAPKTIKEGATKEDAEALKKAIEAVGGKVTLK</sequence>
<evidence type="ECO:0000255" key="1">
    <source>
        <dbReference type="HAMAP-Rule" id="MF_00368"/>
    </source>
</evidence>
<evidence type="ECO:0000305" key="2"/>
<keyword id="KW-0687">Ribonucleoprotein</keyword>
<keyword id="KW-0689">Ribosomal protein</keyword>
<name>RL7_PROM1</name>
<organism>
    <name type="scientific">Prochlorococcus marinus (strain NATL1A)</name>
    <dbReference type="NCBI Taxonomy" id="167555"/>
    <lineage>
        <taxon>Bacteria</taxon>
        <taxon>Bacillati</taxon>
        <taxon>Cyanobacteriota</taxon>
        <taxon>Cyanophyceae</taxon>
        <taxon>Synechococcales</taxon>
        <taxon>Prochlorococcaceae</taxon>
        <taxon>Prochlorococcus</taxon>
    </lineage>
</organism>
<accession>A2C031</accession>
<reference key="1">
    <citation type="journal article" date="2007" name="PLoS Genet.">
        <title>Patterns and implications of gene gain and loss in the evolution of Prochlorococcus.</title>
        <authorList>
            <person name="Kettler G.C."/>
            <person name="Martiny A.C."/>
            <person name="Huang K."/>
            <person name="Zucker J."/>
            <person name="Coleman M.L."/>
            <person name="Rodrigue S."/>
            <person name="Chen F."/>
            <person name="Lapidus A."/>
            <person name="Ferriera S."/>
            <person name="Johnson J."/>
            <person name="Steglich C."/>
            <person name="Church G.M."/>
            <person name="Richardson P."/>
            <person name="Chisholm S.W."/>
        </authorList>
    </citation>
    <scope>NUCLEOTIDE SEQUENCE [LARGE SCALE GENOMIC DNA]</scope>
    <source>
        <strain>NATL1A</strain>
    </source>
</reference>
<comment type="function">
    <text evidence="1">Forms part of the ribosomal stalk which helps the ribosome interact with GTP-bound translation factors. Is thus essential for accurate translation.</text>
</comment>
<comment type="subunit">
    <text evidence="1">Homodimer. Part of the ribosomal stalk of the 50S ribosomal subunit. Forms a multimeric L10(L12)X complex, where L10 forms an elongated spine to which 2 to 4 L12 dimers bind in a sequential fashion. Binds GTP-bound translation factors.</text>
</comment>
<comment type="similarity">
    <text evidence="1">Belongs to the bacterial ribosomal protein bL12 family.</text>
</comment>